<dbReference type="EMBL" id="U33011">
    <property type="protein sequence ID" value="AAC43476.1"/>
    <property type="molecule type" value="Genomic_DNA"/>
</dbReference>
<dbReference type="EMBL" id="AL123456">
    <property type="protein sequence ID" value="CCP44617.1"/>
    <property type="molecule type" value="Genomic_DNA"/>
</dbReference>
<dbReference type="PIR" id="C70665">
    <property type="entry name" value="C70665"/>
</dbReference>
<dbReference type="RefSeq" id="NP_216367.1">
    <property type="nucleotide sequence ID" value="NC_000962.3"/>
</dbReference>
<dbReference type="RefSeq" id="WP_003899050.1">
    <property type="nucleotide sequence ID" value="NZ_NVQJ01000013.1"/>
</dbReference>
<dbReference type="SMR" id="P9WFE5"/>
<dbReference type="STRING" id="83332.Rv1851"/>
<dbReference type="PaxDb" id="83332-Rv1851"/>
<dbReference type="DNASU" id="885532"/>
<dbReference type="GeneID" id="885532"/>
<dbReference type="KEGG" id="mtu:Rv1851"/>
<dbReference type="KEGG" id="mtv:RVBD_1851"/>
<dbReference type="TubercuList" id="Rv1851"/>
<dbReference type="eggNOG" id="COG0830">
    <property type="taxonomic scope" value="Bacteria"/>
</dbReference>
<dbReference type="InParanoid" id="P9WFE5"/>
<dbReference type="OrthoDB" id="3382047at2"/>
<dbReference type="PhylomeDB" id="P9WFE5"/>
<dbReference type="Proteomes" id="UP000001584">
    <property type="component" value="Chromosome"/>
</dbReference>
<dbReference type="GO" id="GO:0005737">
    <property type="term" value="C:cytoplasm"/>
    <property type="evidence" value="ECO:0007669"/>
    <property type="project" value="UniProtKB-SubCell"/>
</dbReference>
<dbReference type="GO" id="GO:0016151">
    <property type="term" value="F:nickel cation binding"/>
    <property type="evidence" value="ECO:0007669"/>
    <property type="project" value="UniProtKB-UniRule"/>
</dbReference>
<dbReference type="Gene3D" id="1.10.4190.10">
    <property type="entry name" value="Urease accessory protein UreF"/>
    <property type="match status" value="1"/>
</dbReference>
<dbReference type="HAMAP" id="MF_01385">
    <property type="entry name" value="UreF"/>
    <property type="match status" value="1"/>
</dbReference>
<dbReference type="InterPro" id="IPR002639">
    <property type="entry name" value="UreF"/>
</dbReference>
<dbReference type="InterPro" id="IPR038277">
    <property type="entry name" value="UreF_sf"/>
</dbReference>
<dbReference type="PANTHER" id="PTHR33620">
    <property type="entry name" value="UREASE ACCESSORY PROTEIN F"/>
    <property type="match status" value="1"/>
</dbReference>
<dbReference type="PANTHER" id="PTHR33620:SF1">
    <property type="entry name" value="UREASE ACCESSORY PROTEIN F"/>
    <property type="match status" value="1"/>
</dbReference>
<dbReference type="Pfam" id="PF01730">
    <property type="entry name" value="UreF"/>
    <property type="match status" value="1"/>
</dbReference>
<dbReference type="PIRSF" id="PIRSF009467">
    <property type="entry name" value="Ureas_acces_UreF"/>
    <property type="match status" value="1"/>
</dbReference>
<comment type="function">
    <text evidence="1">Required for maturation of urease via the functional incorporation of the urease nickel metallocenter.</text>
</comment>
<comment type="subunit">
    <text evidence="1">UreD, UreF and UreG form a complex that acts as a GTP-hydrolysis-dependent molecular chaperone, activating the urease apoprotein by helping to assemble the nickel containing metallocenter of UreC. The UreE protein probably delivers the nickel.</text>
</comment>
<comment type="subcellular location">
    <subcellularLocation>
        <location evidence="1">Cytoplasm</location>
    </subcellularLocation>
</comment>
<comment type="similarity">
    <text evidence="1">Belongs to the UreF family.</text>
</comment>
<sequence>MTSLAVLLTLADSRLPTGAHVHSGGIEEAIAAGMVTGLATLEAFLKRRVRTHGLLTASIAAAVHRGELAVDDADRETDARTPAPAARHASRSQGRGLIRLARRVWPDSGWEELGPRPHLAVVAGRVGALSGLAPEHNALHLVYITMTGSAIAAQRLLALDPAEVTVVTFQLSELCEQIAQEATAGLADLSDPLLDTLAQRHDERVRPLFVS</sequence>
<accession>P9WFE5</accession>
<accession>L0T7W1</accession>
<accession>P50050</accession>
<protein>
    <recommendedName>
        <fullName evidence="1">Urease accessory protein UreF</fullName>
    </recommendedName>
</protein>
<organism>
    <name type="scientific">Mycobacterium tuberculosis (strain ATCC 25618 / H37Rv)</name>
    <dbReference type="NCBI Taxonomy" id="83332"/>
    <lineage>
        <taxon>Bacteria</taxon>
        <taxon>Bacillati</taxon>
        <taxon>Actinomycetota</taxon>
        <taxon>Actinomycetes</taxon>
        <taxon>Mycobacteriales</taxon>
        <taxon>Mycobacteriaceae</taxon>
        <taxon>Mycobacterium</taxon>
        <taxon>Mycobacterium tuberculosis complex</taxon>
    </lineage>
</organism>
<gene>
    <name evidence="1" type="primary">ureF</name>
    <name type="ordered locus">Rv1851</name>
    <name type="ORF">MTCY359.22c</name>
</gene>
<proteinExistence type="inferred from homology"/>
<reference key="1">
    <citation type="journal article" date="1995" name="J. Bacteriol.">
        <title>Purification, characterization, and genetic analysis of Mycobacterium tuberculosis urease, a potentially critical determinant of host-pathogen interaction.</title>
        <authorList>
            <person name="Clemens D.L."/>
            <person name="Lee B.-Y."/>
            <person name="Horwitz M.A."/>
        </authorList>
    </citation>
    <scope>NUCLEOTIDE SEQUENCE [GENOMIC DNA]</scope>
    <source>
        <strain>ATCC 35801 / TMC 107 / Erdman</strain>
    </source>
</reference>
<reference key="2">
    <citation type="journal article" date="1998" name="Nature">
        <title>Deciphering the biology of Mycobacterium tuberculosis from the complete genome sequence.</title>
        <authorList>
            <person name="Cole S.T."/>
            <person name="Brosch R."/>
            <person name="Parkhill J."/>
            <person name="Garnier T."/>
            <person name="Churcher C.M."/>
            <person name="Harris D.E."/>
            <person name="Gordon S.V."/>
            <person name="Eiglmeier K."/>
            <person name="Gas S."/>
            <person name="Barry C.E. III"/>
            <person name="Tekaia F."/>
            <person name="Badcock K."/>
            <person name="Basham D."/>
            <person name="Brown D."/>
            <person name="Chillingworth T."/>
            <person name="Connor R."/>
            <person name="Davies R.M."/>
            <person name="Devlin K."/>
            <person name="Feltwell T."/>
            <person name="Gentles S."/>
            <person name="Hamlin N."/>
            <person name="Holroyd S."/>
            <person name="Hornsby T."/>
            <person name="Jagels K."/>
            <person name="Krogh A."/>
            <person name="McLean J."/>
            <person name="Moule S."/>
            <person name="Murphy L.D."/>
            <person name="Oliver S."/>
            <person name="Osborne J."/>
            <person name="Quail M.A."/>
            <person name="Rajandream M.A."/>
            <person name="Rogers J."/>
            <person name="Rutter S."/>
            <person name="Seeger K."/>
            <person name="Skelton S."/>
            <person name="Squares S."/>
            <person name="Squares R."/>
            <person name="Sulston J.E."/>
            <person name="Taylor K."/>
            <person name="Whitehead S."/>
            <person name="Barrell B.G."/>
        </authorList>
    </citation>
    <scope>NUCLEOTIDE SEQUENCE [LARGE SCALE GENOMIC DNA]</scope>
    <source>
        <strain>ATCC 25618 / H37Rv</strain>
    </source>
</reference>
<feature type="chain" id="PRO_0000067651" description="Urease accessory protein UreF">
    <location>
        <begin position="1"/>
        <end position="211"/>
    </location>
</feature>
<feature type="region of interest" description="Disordered" evidence="2">
    <location>
        <begin position="71"/>
        <end position="93"/>
    </location>
</feature>
<name>UREF_MYCTU</name>
<evidence type="ECO:0000255" key="1">
    <source>
        <dbReference type="HAMAP-Rule" id="MF_01385"/>
    </source>
</evidence>
<evidence type="ECO:0000256" key="2">
    <source>
        <dbReference type="SAM" id="MobiDB-lite"/>
    </source>
</evidence>
<keyword id="KW-0143">Chaperone</keyword>
<keyword id="KW-0963">Cytoplasm</keyword>
<keyword id="KW-0996">Nickel insertion</keyword>
<keyword id="KW-1185">Reference proteome</keyword>